<reference key="1">
    <citation type="journal article" date="2006" name="Proc. Natl. Acad. Sci. U.S.A.">
        <title>Identification of genes subject to positive selection in uropathogenic strains of Escherichia coli: a comparative genomics approach.</title>
        <authorList>
            <person name="Chen S.L."/>
            <person name="Hung C.-S."/>
            <person name="Xu J."/>
            <person name="Reigstad C.S."/>
            <person name="Magrini V."/>
            <person name="Sabo A."/>
            <person name="Blasiar D."/>
            <person name="Bieri T."/>
            <person name="Meyer R.R."/>
            <person name="Ozersky P."/>
            <person name="Armstrong J.R."/>
            <person name="Fulton R.S."/>
            <person name="Latreille J.P."/>
            <person name="Spieth J."/>
            <person name="Hooton T.M."/>
            <person name="Mardis E.R."/>
            <person name="Hultgren S.J."/>
            <person name="Gordon J.I."/>
        </authorList>
    </citation>
    <scope>NUCLEOTIDE SEQUENCE [LARGE SCALE GENOMIC DNA]</scope>
    <source>
        <strain>UTI89 / UPEC</strain>
    </source>
</reference>
<sequence>MESLASLYKNHIATLQERTRDALARFKLDALLIHSGELFNVFLDDHPYPFKVNPQFKAWVPVTQVPNCWLLVDGVNKPKLWFYLPVDYWHNVEPLPNSFWTEDVEVIALPKADGIGSLLPAARGNIGYIGPVPERALQLGIEASNINPKGVIDYLHYYRSFKTEYELACMREAQKMAVNGHRAAEEAFRSGMSEFDINIAYLTATGHRDTDVPYSNIVALNEHAAVLHYTKLDHQAPEEMRSFLLDAGAEYNGYAADLTRTWSAKSDNDYAQLVKDVNDEQLALIATMKAGVSYVDYHIQFHQRIAKLLRKHQIITDMSEEAMVENDLTGPFMPHGIGHPLGLQVHDVAGFMQDDSGTHLAAPAKYPYLRCTRILQPGMVLTIEPGIYFIESLLAPWREGQFSKHFNWQKIEALKPFGGIRIEDNVVIHENNVENMTRDLKLA</sequence>
<organism>
    <name type="scientific">Escherichia coli (strain UTI89 / UPEC)</name>
    <dbReference type="NCBI Taxonomy" id="364106"/>
    <lineage>
        <taxon>Bacteria</taxon>
        <taxon>Pseudomonadati</taxon>
        <taxon>Pseudomonadota</taxon>
        <taxon>Gammaproteobacteria</taxon>
        <taxon>Enterobacterales</taxon>
        <taxon>Enterobacteriaceae</taxon>
        <taxon>Escherichia</taxon>
    </lineage>
</organism>
<gene>
    <name evidence="1" type="primary">pepQ</name>
    <name type="ordered locus">UTI89_C4432</name>
</gene>
<accession>Q1R465</accession>
<evidence type="ECO:0000255" key="1">
    <source>
        <dbReference type="HAMAP-Rule" id="MF_01279"/>
    </source>
</evidence>
<dbReference type="EC" id="3.4.13.9" evidence="1"/>
<dbReference type="EMBL" id="CP000243">
    <property type="protein sequence ID" value="ABE09849.1"/>
    <property type="molecule type" value="Genomic_DNA"/>
</dbReference>
<dbReference type="RefSeq" id="WP_000444545.1">
    <property type="nucleotide sequence ID" value="NZ_CP064825.1"/>
</dbReference>
<dbReference type="SMR" id="Q1R465"/>
<dbReference type="MEROPS" id="M24.003"/>
<dbReference type="KEGG" id="eci:UTI89_C4432"/>
<dbReference type="HOGENOM" id="CLU_050675_0_0_6"/>
<dbReference type="Proteomes" id="UP000001952">
    <property type="component" value="Chromosome"/>
</dbReference>
<dbReference type="GO" id="GO:0005829">
    <property type="term" value="C:cytosol"/>
    <property type="evidence" value="ECO:0007669"/>
    <property type="project" value="TreeGrafter"/>
</dbReference>
<dbReference type="GO" id="GO:0004177">
    <property type="term" value="F:aminopeptidase activity"/>
    <property type="evidence" value="ECO:0007669"/>
    <property type="project" value="TreeGrafter"/>
</dbReference>
<dbReference type="GO" id="GO:0046872">
    <property type="term" value="F:metal ion binding"/>
    <property type="evidence" value="ECO:0007669"/>
    <property type="project" value="UniProtKB-KW"/>
</dbReference>
<dbReference type="GO" id="GO:0008235">
    <property type="term" value="F:metalloexopeptidase activity"/>
    <property type="evidence" value="ECO:0007669"/>
    <property type="project" value="UniProtKB-UniRule"/>
</dbReference>
<dbReference type="GO" id="GO:0016795">
    <property type="term" value="F:phosphoric triester hydrolase activity"/>
    <property type="evidence" value="ECO:0007669"/>
    <property type="project" value="InterPro"/>
</dbReference>
<dbReference type="GO" id="GO:0102009">
    <property type="term" value="F:proline dipeptidase activity"/>
    <property type="evidence" value="ECO:0007669"/>
    <property type="project" value="UniProtKB-EC"/>
</dbReference>
<dbReference type="GO" id="GO:0006508">
    <property type="term" value="P:proteolysis"/>
    <property type="evidence" value="ECO:0007669"/>
    <property type="project" value="UniProtKB-KW"/>
</dbReference>
<dbReference type="CDD" id="cd01087">
    <property type="entry name" value="Prolidase"/>
    <property type="match status" value="1"/>
</dbReference>
<dbReference type="FunFam" id="3.40.350.10:FF:000002">
    <property type="entry name" value="Xaa-Pro dipeptidase"/>
    <property type="match status" value="1"/>
</dbReference>
<dbReference type="FunFam" id="3.90.230.10:FF:000006">
    <property type="entry name" value="Xaa-Pro dipeptidase"/>
    <property type="match status" value="1"/>
</dbReference>
<dbReference type="Gene3D" id="3.90.230.10">
    <property type="entry name" value="Creatinase/methionine aminopeptidase superfamily"/>
    <property type="match status" value="1"/>
</dbReference>
<dbReference type="Gene3D" id="3.40.350.10">
    <property type="entry name" value="Creatinase/prolidase N-terminal domain"/>
    <property type="match status" value="1"/>
</dbReference>
<dbReference type="HAMAP" id="MF_01279">
    <property type="entry name" value="X_Pro_dipeptid"/>
    <property type="match status" value="1"/>
</dbReference>
<dbReference type="InterPro" id="IPR029149">
    <property type="entry name" value="Creatin/AminoP/Spt16_N"/>
</dbReference>
<dbReference type="InterPro" id="IPR036005">
    <property type="entry name" value="Creatinase/aminopeptidase-like"/>
</dbReference>
<dbReference type="InterPro" id="IPR048819">
    <property type="entry name" value="PepQ_N"/>
</dbReference>
<dbReference type="InterPro" id="IPR000994">
    <property type="entry name" value="Pept_M24"/>
</dbReference>
<dbReference type="InterPro" id="IPR001131">
    <property type="entry name" value="Peptidase_M24B_aminopep-P_CS"/>
</dbReference>
<dbReference type="InterPro" id="IPR052433">
    <property type="entry name" value="X-Pro_dipept-like"/>
</dbReference>
<dbReference type="InterPro" id="IPR022846">
    <property type="entry name" value="X_Pro_dipept"/>
</dbReference>
<dbReference type="NCBIfam" id="NF010133">
    <property type="entry name" value="PRK13607.1"/>
    <property type="match status" value="1"/>
</dbReference>
<dbReference type="PANTHER" id="PTHR43226">
    <property type="entry name" value="XAA-PRO AMINOPEPTIDASE 3"/>
    <property type="match status" value="1"/>
</dbReference>
<dbReference type="PANTHER" id="PTHR43226:SF8">
    <property type="entry name" value="XAA-PRO DIPEPTIDASE"/>
    <property type="match status" value="1"/>
</dbReference>
<dbReference type="Pfam" id="PF21216">
    <property type="entry name" value="PepQ_N"/>
    <property type="match status" value="1"/>
</dbReference>
<dbReference type="Pfam" id="PF00557">
    <property type="entry name" value="Peptidase_M24"/>
    <property type="match status" value="1"/>
</dbReference>
<dbReference type="SUPFAM" id="SSF55920">
    <property type="entry name" value="Creatinase/aminopeptidase"/>
    <property type="match status" value="1"/>
</dbReference>
<dbReference type="PROSITE" id="PS00491">
    <property type="entry name" value="PROLINE_PEPTIDASE"/>
    <property type="match status" value="1"/>
</dbReference>
<proteinExistence type="inferred from homology"/>
<feature type="chain" id="PRO_0000303841" description="Xaa-Pro dipeptidase">
    <location>
        <begin position="1"/>
        <end position="443"/>
    </location>
</feature>
<feature type="binding site" evidence="1">
    <location>
        <position position="246"/>
    </location>
    <ligand>
        <name>Mn(2+)</name>
        <dbReference type="ChEBI" id="CHEBI:29035"/>
        <label>2</label>
    </ligand>
</feature>
<feature type="binding site" evidence="1">
    <location>
        <position position="257"/>
    </location>
    <ligand>
        <name>Mn(2+)</name>
        <dbReference type="ChEBI" id="CHEBI:29035"/>
        <label>1</label>
    </ligand>
</feature>
<feature type="binding site" evidence="1">
    <location>
        <position position="257"/>
    </location>
    <ligand>
        <name>Mn(2+)</name>
        <dbReference type="ChEBI" id="CHEBI:29035"/>
        <label>2</label>
    </ligand>
</feature>
<feature type="binding site" evidence="1">
    <location>
        <position position="339"/>
    </location>
    <ligand>
        <name>Mn(2+)</name>
        <dbReference type="ChEBI" id="CHEBI:29035"/>
        <label>1</label>
    </ligand>
</feature>
<feature type="binding site" evidence="1">
    <location>
        <position position="384"/>
    </location>
    <ligand>
        <name>Mn(2+)</name>
        <dbReference type="ChEBI" id="CHEBI:29035"/>
        <label>1</label>
    </ligand>
</feature>
<feature type="binding site" evidence="1">
    <location>
        <position position="423"/>
    </location>
    <ligand>
        <name>Mn(2+)</name>
        <dbReference type="ChEBI" id="CHEBI:29035"/>
        <label>1</label>
    </ligand>
</feature>
<feature type="binding site" evidence="1">
    <location>
        <position position="423"/>
    </location>
    <ligand>
        <name>Mn(2+)</name>
        <dbReference type="ChEBI" id="CHEBI:29035"/>
        <label>2</label>
    </ligand>
</feature>
<protein>
    <recommendedName>
        <fullName evidence="1">Xaa-Pro dipeptidase</fullName>
        <shortName evidence="1">X-Pro dipeptidase</shortName>
        <ecNumber evidence="1">3.4.13.9</ecNumber>
    </recommendedName>
    <alternativeName>
        <fullName evidence="1">Imidodipeptidase</fullName>
    </alternativeName>
    <alternativeName>
        <fullName evidence="1">Proline dipeptidase</fullName>
        <shortName evidence="1">Prolidase</shortName>
    </alternativeName>
</protein>
<comment type="function">
    <text evidence="1">Splits dipeptides with a prolyl residue in the C-terminal position.</text>
</comment>
<comment type="catalytic activity">
    <reaction evidence="1">
        <text>Xaa-L-Pro dipeptide + H2O = an L-alpha-amino acid + L-proline</text>
        <dbReference type="Rhea" id="RHEA:76407"/>
        <dbReference type="ChEBI" id="CHEBI:15377"/>
        <dbReference type="ChEBI" id="CHEBI:59869"/>
        <dbReference type="ChEBI" id="CHEBI:60039"/>
        <dbReference type="ChEBI" id="CHEBI:195196"/>
        <dbReference type="EC" id="3.4.13.9"/>
    </reaction>
</comment>
<comment type="cofactor">
    <cofactor evidence="1">
        <name>Mn(2+)</name>
        <dbReference type="ChEBI" id="CHEBI:29035"/>
    </cofactor>
    <text evidence="1">Binds 2 manganese ions per subunit.</text>
</comment>
<comment type="similarity">
    <text evidence="1">Belongs to the peptidase M24B family. Bacterial-type prolidase subfamily.</text>
</comment>
<keyword id="KW-0224">Dipeptidase</keyword>
<keyword id="KW-0378">Hydrolase</keyword>
<keyword id="KW-0464">Manganese</keyword>
<keyword id="KW-0479">Metal-binding</keyword>
<keyword id="KW-0482">Metalloprotease</keyword>
<keyword id="KW-0645">Protease</keyword>
<name>PEPQ_ECOUT</name>